<comment type="function">
    <text evidence="4">The function of this enzyme is unclear as allantoicase activity is not known to exist in mammals.</text>
</comment>
<comment type="alternative products">
    <event type="alternative splicing"/>
    <isoform>
        <id>Q8N6M5-1</id>
        <name>1</name>
        <sequence type="displayed"/>
    </isoform>
    <isoform>
        <id>Q8N6M5-2</id>
        <name>2</name>
        <sequence type="described" ref="VSP_015618"/>
    </isoform>
</comment>
<comment type="polymorphism">
    <text evidence="3">Product of a polymorphic gene which also produces a longer 410-residue protein due to a polymorphism which affects Met-1, resulting in a longer protein starting at an upstream Met.</text>
</comment>
<comment type="similarity">
    <text evidence="3">Belongs to the allantoicase family.</text>
</comment>
<feature type="chain" id="PRO_0000205905" description="Probable inactive allantoicase">
    <location>
        <begin position="1"/>
        <end position="391"/>
    </location>
</feature>
<feature type="splice variant" id="VSP_015618" description="In isoform 2." evidence="1 2">
    <location>
        <begin position="1"/>
        <end position="229"/>
    </location>
</feature>
<feature type="sequence variant" id="VAR_080299">
    <original>M</original>
    <variation>MADAPKEGRLTRFLDFTQLM</variation>
    <location>
        <position position="1"/>
    </location>
</feature>
<feature type="sequence conflict" description="In Ref. 5; AAH29652 and 6; AAK72970." evidence="3" ref="5 6">
    <original>T</original>
    <variation>I</variation>
    <location>
        <position position="110"/>
    </location>
</feature>
<feature type="sequence conflict" description="In Ref. 6; AAK72970." evidence="3" ref="6">
    <original>L</original>
    <variation>P</variation>
    <location>
        <position position="127"/>
    </location>
</feature>
<feature type="sequence conflict" description="In Ref. 1; AAF67097, 5; AAH29652 and 6; AAK72970." evidence="3" ref="1 5 6">
    <location>
        <position position="301"/>
    </location>
</feature>
<dbReference type="EMBL" id="AF215924">
    <property type="protein sequence ID" value="AAF67097.1"/>
    <property type="molecule type" value="mRNA"/>
</dbReference>
<dbReference type="EMBL" id="AK302299">
    <property type="protein sequence ID" value="BAG63639.1"/>
    <property type="molecule type" value="mRNA"/>
</dbReference>
<dbReference type="EMBL" id="AC010907">
    <property type="protein sequence ID" value="AAY24236.1"/>
    <property type="molecule type" value="Genomic_DNA"/>
</dbReference>
<dbReference type="EMBL" id="CH471053">
    <property type="protein sequence ID" value="EAX01050.1"/>
    <property type="molecule type" value="Genomic_DNA"/>
</dbReference>
<dbReference type="EMBL" id="BC029652">
    <property type="protein sequence ID" value="AAH29652.1"/>
    <property type="molecule type" value="mRNA"/>
</dbReference>
<dbReference type="EMBL" id="BC035356">
    <property type="protein sequence ID" value="AAH35356.1"/>
    <property type="molecule type" value="mRNA"/>
</dbReference>
<dbReference type="EMBL" id="AF395820">
    <property type="protein sequence ID" value="AAK72970.1"/>
    <property type="molecule type" value="mRNA"/>
</dbReference>
<dbReference type="CCDS" id="CCDS46223.1">
    <molecule id="Q8N6M5-1"/>
</dbReference>
<dbReference type="RefSeq" id="NP_060906.3">
    <molecule id="Q8N6M5-1"/>
    <property type="nucleotide sequence ID" value="NM_018436.3"/>
</dbReference>
<dbReference type="SMR" id="Q8N6M5"/>
<dbReference type="BioGRID" id="120929">
    <property type="interactions" value="2"/>
</dbReference>
<dbReference type="FunCoup" id="Q8N6M5">
    <property type="interactions" value="129"/>
</dbReference>
<dbReference type="IntAct" id="Q8N6M5">
    <property type="interactions" value="2"/>
</dbReference>
<dbReference type="MINT" id="Q8N6M5"/>
<dbReference type="STRING" id="9606.ENSP00000252505"/>
<dbReference type="iPTMnet" id="Q8N6M5"/>
<dbReference type="PhosphoSitePlus" id="Q8N6M5"/>
<dbReference type="BioMuta" id="ALLC"/>
<dbReference type="DMDM" id="327478594"/>
<dbReference type="MassIVE" id="Q8N6M5"/>
<dbReference type="PaxDb" id="9606-ENSP00000252505"/>
<dbReference type="PeptideAtlas" id="Q8N6M5"/>
<dbReference type="ProteomicsDB" id="5505"/>
<dbReference type="ProteomicsDB" id="72193">
    <molecule id="Q8N6M5-1"/>
</dbReference>
<dbReference type="Antibodypedia" id="26390">
    <property type="antibodies" value="94 antibodies from 20 providers"/>
</dbReference>
<dbReference type="DNASU" id="55821"/>
<dbReference type="Ensembl" id="ENST00000252505.4">
    <molecule id="Q8N6M5-1"/>
    <property type="protein sequence ID" value="ENSP00000252505.3"/>
    <property type="gene ID" value="ENSG00000151360.10"/>
</dbReference>
<dbReference type="GeneID" id="55821"/>
<dbReference type="KEGG" id="hsa:55821"/>
<dbReference type="MANE-Select" id="ENST00000252505.4">
    <property type="protein sequence ID" value="ENSP00000252505.3"/>
    <property type="RefSeq nucleotide sequence ID" value="NM_018436.4"/>
    <property type="RefSeq protein sequence ID" value="NP_060906.3"/>
</dbReference>
<dbReference type="UCSC" id="uc010ewt.4">
    <property type="organism name" value="human"/>
</dbReference>
<dbReference type="AGR" id="HGNC:17377"/>
<dbReference type="CTD" id="55821"/>
<dbReference type="DisGeNET" id="55821"/>
<dbReference type="GeneCards" id="ALLC"/>
<dbReference type="HGNC" id="HGNC:17377">
    <property type="gene designation" value="ALLC"/>
</dbReference>
<dbReference type="HPA" id="ENSG00000151360">
    <property type="expression patterns" value="Tissue enriched (testis)"/>
</dbReference>
<dbReference type="MIM" id="612396">
    <property type="type" value="gene"/>
</dbReference>
<dbReference type="neXtProt" id="NX_Q8N6M5"/>
<dbReference type="OpenTargets" id="ENSG00000151360"/>
<dbReference type="PharmGKB" id="PA24720"/>
<dbReference type="VEuPathDB" id="HostDB:ENSG00000151360"/>
<dbReference type="eggNOG" id="KOG4145">
    <property type="taxonomic scope" value="Eukaryota"/>
</dbReference>
<dbReference type="GeneTree" id="ENSGT00390000001793"/>
<dbReference type="HOGENOM" id="CLU_038797_1_2_1"/>
<dbReference type="InParanoid" id="Q8N6M5"/>
<dbReference type="OMA" id="MDDGWET"/>
<dbReference type="OrthoDB" id="10266039at2759"/>
<dbReference type="PAN-GO" id="Q8N6M5">
    <property type="GO annotations" value="0 GO annotations based on evolutionary models"/>
</dbReference>
<dbReference type="PhylomeDB" id="Q8N6M5"/>
<dbReference type="TreeFam" id="TF324677"/>
<dbReference type="PathwayCommons" id="Q8N6M5"/>
<dbReference type="SignaLink" id="Q8N6M5"/>
<dbReference type="BioGRID-ORCS" id="55821">
    <property type="hits" value="18 hits in 1152 CRISPR screens"/>
</dbReference>
<dbReference type="ChiTaRS" id="ALLC">
    <property type="organism name" value="human"/>
</dbReference>
<dbReference type="GenomeRNAi" id="55821"/>
<dbReference type="Pharos" id="Q8N6M5">
    <property type="development level" value="Tdark"/>
</dbReference>
<dbReference type="PRO" id="PR:Q8N6M5"/>
<dbReference type="Proteomes" id="UP000005640">
    <property type="component" value="Chromosome 2"/>
</dbReference>
<dbReference type="RNAct" id="Q8N6M5">
    <property type="molecule type" value="protein"/>
</dbReference>
<dbReference type="Bgee" id="ENSG00000151360">
    <property type="expression patterns" value="Expressed in sperm and 104 other cell types or tissues"/>
</dbReference>
<dbReference type="GO" id="GO:0004037">
    <property type="term" value="F:allantoicase activity"/>
    <property type="evidence" value="ECO:0007669"/>
    <property type="project" value="UniProtKB-EC"/>
</dbReference>
<dbReference type="GO" id="GO:0000256">
    <property type="term" value="P:allantoin catabolic process"/>
    <property type="evidence" value="ECO:0007669"/>
    <property type="project" value="InterPro"/>
</dbReference>
<dbReference type="FunFam" id="2.60.120.260:FF:000077">
    <property type="entry name" value="Probable allantoicase"/>
    <property type="match status" value="1"/>
</dbReference>
<dbReference type="FunFam" id="2.60.120.260:FF:000085">
    <property type="entry name" value="probable allantoicase"/>
    <property type="match status" value="1"/>
</dbReference>
<dbReference type="Gene3D" id="2.60.120.260">
    <property type="entry name" value="Galactose-binding domain-like"/>
    <property type="match status" value="2"/>
</dbReference>
<dbReference type="HAMAP" id="MF_00813">
    <property type="entry name" value="Allantoicase"/>
    <property type="match status" value="1"/>
</dbReference>
<dbReference type="InterPro" id="IPR005164">
    <property type="entry name" value="Allantoicase"/>
</dbReference>
<dbReference type="InterPro" id="IPR015908">
    <property type="entry name" value="Allantoicase_dom"/>
</dbReference>
<dbReference type="InterPro" id="IPR008979">
    <property type="entry name" value="Galactose-bd-like_sf"/>
</dbReference>
<dbReference type="NCBIfam" id="TIGR02961">
    <property type="entry name" value="allantoicase"/>
    <property type="match status" value="1"/>
</dbReference>
<dbReference type="PANTHER" id="PTHR12045">
    <property type="entry name" value="ALLANTOICASE"/>
    <property type="match status" value="1"/>
</dbReference>
<dbReference type="PANTHER" id="PTHR12045:SF3">
    <property type="entry name" value="INACTIVE ALLANTOICASE-RELATED"/>
    <property type="match status" value="1"/>
</dbReference>
<dbReference type="Pfam" id="PF03561">
    <property type="entry name" value="Allantoicase"/>
    <property type="match status" value="2"/>
</dbReference>
<dbReference type="PIRSF" id="PIRSF016516">
    <property type="entry name" value="Allantoicase"/>
    <property type="match status" value="1"/>
</dbReference>
<dbReference type="SUPFAM" id="SSF49785">
    <property type="entry name" value="Galactose-binding domain-like"/>
    <property type="match status" value="2"/>
</dbReference>
<proteinExistence type="evidence at protein level"/>
<accession>Q8N6M5</accession>
<accession>B4DY77</accession>
<accession>Q53T95</accession>
<accession>Q5RL81</accession>
<accession>Q96RE6</accession>
<accession>Q9NZA7</accession>
<name>ALLC_HUMAN</name>
<gene>
    <name evidence="7" type="primary">ALLC</name>
</gene>
<sequence>MDMASESVGGKILFATDDFFAPAENLIKSDSPCFKEHEYTEFGKWMDGWETRRKRIPGHDWCVLRLGIQGVIRGFDVDVSYFTGDYAPRVSIQAANLEEDKLPEIPERGTRTGAAATPEEFEAIAELKSDDWSYLVPMTELKPGNPASGHNYFLVNSQQRWTHIRLNIFPDGGIARLRVFGTGQKDWTATDPKEPADLVAIAFGGVCVGFSNAKFGHPNNIIGVGGAKSMADGWETARRLDRPPILENDENGILLVPGCEWAVFRLAHPGVITRIEIDTKYFEGNAPDSCKVDGCILTTQEEEAVIRQKWILPAHKWKPLLPVTKLSPNQSHLFDSLTLELQDVITHARLTIVPDGGVSRLRLRGFPSSICLLRPREKPMLKFSVSFKANP</sequence>
<keyword id="KW-0025">Alternative splicing</keyword>
<keyword id="KW-1267">Proteomics identification</keyword>
<keyword id="KW-1185">Reference proteome</keyword>
<reference key="1">
    <citation type="journal article" date="2000" name="Gene">
        <title>Human allantoicase gene: cDNA cloning, genomic organization and chromosome localization.</title>
        <authorList>
            <person name="Vigetti D."/>
            <person name="Monetti C."/>
            <person name="Acquati F."/>
            <person name="Taramelli R."/>
            <person name="Bernardini G."/>
        </authorList>
    </citation>
    <scope>NUCLEOTIDE SEQUENCE [MRNA] (ISOFORM 2)</scope>
    <source>
        <tissue>Fetal spleen</tissue>
    </source>
</reference>
<reference evidence="5" key="2">
    <citation type="journal article" date="2004" name="Nat. Genet.">
        <title>Complete sequencing and characterization of 21,243 full-length human cDNAs.</title>
        <authorList>
            <person name="Ota T."/>
            <person name="Suzuki Y."/>
            <person name="Nishikawa T."/>
            <person name="Otsuki T."/>
            <person name="Sugiyama T."/>
            <person name="Irie R."/>
            <person name="Wakamatsu A."/>
            <person name="Hayashi K."/>
            <person name="Sato H."/>
            <person name="Nagai K."/>
            <person name="Kimura K."/>
            <person name="Makita H."/>
            <person name="Sekine M."/>
            <person name="Obayashi M."/>
            <person name="Nishi T."/>
            <person name="Shibahara T."/>
            <person name="Tanaka T."/>
            <person name="Ishii S."/>
            <person name="Yamamoto J."/>
            <person name="Saito K."/>
            <person name="Kawai Y."/>
            <person name="Isono Y."/>
            <person name="Nakamura Y."/>
            <person name="Nagahari K."/>
            <person name="Murakami K."/>
            <person name="Yasuda T."/>
            <person name="Iwayanagi T."/>
            <person name="Wagatsuma M."/>
            <person name="Shiratori A."/>
            <person name="Sudo H."/>
            <person name="Hosoiri T."/>
            <person name="Kaku Y."/>
            <person name="Kodaira H."/>
            <person name="Kondo H."/>
            <person name="Sugawara M."/>
            <person name="Takahashi M."/>
            <person name="Kanda K."/>
            <person name="Yokoi T."/>
            <person name="Furuya T."/>
            <person name="Kikkawa E."/>
            <person name="Omura Y."/>
            <person name="Abe K."/>
            <person name="Kamihara K."/>
            <person name="Katsuta N."/>
            <person name="Sato K."/>
            <person name="Tanikawa M."/>
            <person name="Yamazaki M."/>
            <person name="Ninomiya K."/>
            <person name="Ishibashi T."/>
            <person name="Yamashita H."/>
            <person name="Murakawa K."/>
            <person name="Fujimori K."/>
            <person name="Tanai H."/>
            <person name="Kimata M."/>
            <person name="Watanabe M."/>
            <person name="Hiraoka S."/>
            <person name="Chiba Y."/>
            <person name="Ishida S."/>
            <person name="Ono Y."/>
            <person name="Takiguchi S."/>
            <person name="Watanabe S."/>
            <person name="Yosida M."/>
            <person name="Hotuta T."/>
            <person name="Kusano J."/>
            <person name="Kanehori K."/>
            <person name="Takahashi-Fujii A."/>
            <person name="Hara H."/>
            <person name="Tanase T.-O."/>
            <person name="Nomura Y."/>
            <person name="Togiya S."/>
            <person name="Komai F."/>
            <person name="Hara R."/>
            <person name="Takeuchi K."/>
            <person name="Arita M."/>
            <person name="Imose N."/>
            <person name="Musashino K."/>
            <person name="Yuuki H."/>
            <person name="Oshima A."/>
            <person name="Sasaki N."/>
            <person name="Aotsuka S."/>
            <person name="Yoshikawa Y."/>
            <person name="Matsunawa H."/>
            <person name="Ichihara T."/>
            <person name="Shiohata N."/>
            <person name="Sano S."/>
            <person name="Moriya S."/>
            <person name="Momiyama H."/>
            <person name="Satoh N."/>
            <person name="Takami S."/>
            <person name="Terashima Y."/>
            <person name="Suzuki O."/>
            <person name="Nakagawa S."/>
            <person name="Senoh A."/>
            <person name="Mizoguchi H."/>
            <person name="Goto Y."/>
            <person name="Shimizu F."/>
            <person name="Wakebe H."/>
            <person name="Hishigaki H."/>
            <person name="Watanabe T."/>
            <person name="Sugiyama A."/>
            <person name="Takemoto M."/>
            <person name="Kawakami B."/>
            <person name="Yamazaki M."/>
            <person name="Watanabe K."/>
            <person name="Kumagai A."/>
            <person name="Itakura S."/>
            <person name="Fukuzumi Y."/>
            <person name="Fujimori Y."/>
            <person name="Komiyama M."/>
            <person name="Tashiro H."/>
            <person name="Tanigami A."/>
            <person name="Fujiwara T."/>
            <person name="Ono T."/>
            <person name="Yamada K."/>
            <person name="Fujii Y."/>
            <person name="Ozaki K."/>
            <person name="Hirao M."/>
            <person name="Ohmori Y."/>
            <person name="Kawabata A."/>
            <person name="Hikiji T."/>
            <person name="Kobatake N."/>
            <person name="Inagaki H."/>
            <person name="Ikema Y."/>
            <person name="Okamoto S."/>
            <person name="Okitani R."/>
            <person name="Kawakami T."/>
            <person name="Noguchi S."/>
            <person name="Itoh T."/>
            <person name="Shigeta K."/>
            <person name="Senba T."/>
            <person name="Matsumura K."/>
            <person name="Nakajima Y."/>
            <person name="Mizuno T."/>
            <person name="Morinaga M."/>
            <person name="Sasaki M."/>
            <person name="Togashi T."/>
            <person name="Oyama M."/>
            <person name="Hata H."/>
            <person name="Watanabe M."/>
            <person name="Komatsu T."/>
            <person name="Mizushima-Sugano J."/>
            <person name="Satoh T."/>
            <person name="Shirai Y."/>
            <person name="Takahashi Y."/>
            <person name="Nakagawa K."/>
            <person name="Okumura K."/>
            <person name="Nagase T."/>
            <person name="Nomura N."/>
            <person name="Kikuchi H."/>
            <person name="Masuho Y."/>
            <person name="Yamashita R."/>
            <person name="Nakai K."/>
            <person name="Yada T."/>
            <person name="Nakamura Y."/>
            <person name="Ohara O."/>
            <person name="Isogai T."/>
            <person name="Sugano S."/>
        </authorList>
    </citation>
    <scope>NUCLEOTIDE SEQUENCE [LARGE SCALE MRNA] (ISOFORM 1)</scope>
    <source>
        <tissue evidence="5">Testis</tissue>
    </source>
</reference>
<reference key="3">
    <citation type="journal article" date="2005" name="Nature">
        <title>Generation and annotation of the DNA sequences of human chromosomes 2 and 4.</title>
        <authorList>
            <person name="Hillier L.W."/>
            <person name="Graves T.A."/>
            <person name="Fulton R.S."/>
            <person name="Fulton L.A."/>
            <person name="Pepin K.H."/>
            <person name="Minx P."/>
            <person name="Wagner-McPherson C."/>
            <person name="Layman D."/>
            <person name="Wylie K."/>
            <person name="Sekhon M."/>
            <person name="Becker M.C."/>
            <person name="Fewell G.A."/>
            <person name="Delehaunty K.D."/>
            <person name="Miner T.L."/>
            <person name="Nash W.E."/>
            <person name="Kremitzki C."/>
            <person name="Oddy L."/>
            <person name="Du H."/>
            <person name="Sun H."/>
            <person name="Bradshaw-Cordum H."/>
            <person name="Ali J."/>
            <person name="Carter J."/>
            <person name="Cordes M."/>
            <person name="Harris A."/>
            <person name="Isak A."/>
            <person name="van Brunt A."/>
            <person name="Nguyen C."/>
            <person name="Du F."/>
            <person name="Courtney L."/>
            <person name="Kalicki J."/>
            <person name="Ozersky P."/>
            <person name="Abbott S."/>
            <person name="Armstrong J."/>
            <person name="Belter E.A."/>
            <person name="Caruso L."/>
            <person name="Cedroni M."/>
            <person name="Cotton M."/>
            <person name="Davidson T."/>
            <person name="Desai A."/>
            <person name="Elliott G."/>
            <person name="Erb T."/>
            <person name="Fronick C."/>
            <person name="Gaige T."/>
            <person name="Haakenson W."/>
            <person name="Haglund K."/>
            <person name="Holmes A."/>
            <person name="Harkins R."/>
            <person name="Kim K."/>
            <person name="Kruchowski S.S."/>
            <person name="Strong C.M."/>
            <person name="Grewal N."/>
            <person name="Goyea E."/>
            <person name="Hou S."/>
            <person name="Levy A."/>
            <person name="Martinka S."/>
            <person name="Mead K."/>
            <person name="McLellan M.D."/>
            <person name="Meyer R."/>
            <person name="Randall-Maher J."/>
            <person name="Tomlinson C."/>
            <person name="Dauphin-Kohlberg S."/>
            <person name="Kozlowicz-Reilly A."/>
            <person name="Shah N."/>
            <person name="Swearengen-Shahid S."/>
            <person name="Snider J."/>
            <person name="Strong J.T."/>
            <person name="Thompson J."/>
            <person name="Yoakum M."/>
            <person name="Leonard S."/>
            <person name="Pearman C."/>
            <person name="Trani L."/>
            <person name="Radionenko M."/>
            <person name="Waligorski J.E."/>
            <person name="Wang C."/>
            <person name="Rock S.M."/>
            <person name="Tin-Wollam A.-M."/>
            <person name="Maupin R."/>
            <person name="Latreille P."/>
            <person name="Wendl M.C."/>
            <person name="Yang S.-P."/>
            <person name="Pohl C."/>
            <person name="Wallis J.W."/>
            <person name="Spieth J."/>
            <person name="Bieri T.A."/>
            <person name="Berkowicz N."/>
            <person name="Nelson J.O."/>
            <person name="Osborne J."/>
            <person name="Ding L."/>
            <person name="Meyer R."/>
            <person name="Sabo A."/>
            <person name="Shotland Y."/>
            <person name="Sinha P."/>
            <person name="Wohldmann P.E."/>
            <person name="Cook L.L."/>
            <person name="Hickenbotham M.T."/>
            <person name="Eldred J."/>
            <person name="Williams D."/>
            <person name="Jones T.A."/>
            <person name="She X."/>
            <person name="Ciccarelli F.D."/>
            <person name="Izaurralde E."/>
            <person name="Taylor J."/>
            <person name="Schmutz J."/>
            <person name="Myers R.M."/>
            <person name="Cox D.R."/>
            <person name="Huang X."/>
            <person name="McPherson J.D."/>
            <person name="Mardis E.R."/>
            <person name="Clifton S.W."/>
            <person name="Warren W.C."/>
            <person name="Chinwalla A.T."/>
            <person name="Eddy S.R."/>
            <person name="Marra M.A."/>
            <person name="Ovcharenko I."/>
            <person name="Furey T.S."/>
            <person name="Miller W."/>
            <person name="Eichler E.E."/>
            <person name="Bork P."/>
            <person name="Suyama M."/>
            <person name="Torrents D."/>
            <person name="Waterston R.H."/>
            <person name="Wilson R.K."/>
        </authorList>
    </citation>
    <scope>NUCLEOTIDE SEQUENCE [LARGE SCALE GENOMIC DNA]</scope>
</reference>
<reference evidence="6" key="4">
    <citation type="submission" date="2005-09" db="EMBL/GenBank/DDBJ databases">
        <authorList>
            <person name="Mural R.J."/>
            <person name="Istrail S."/>
            <person name="Sutton G.G."/>
            <person name="Florea L."/>
            <person name="Halpern A.L."/>
            <person name="Mobarry C.M."/>
            <person name="Lippert R."/>
            <person name="Walenz B."/>
            <person name="Shatkay H."/>
            <person name="Dew I."/>
            <person name="Miller J.R."/>
            <person name="Flanigan M.J."/>
            <person name="Edwards N.J."/>
            <person name="Bolanos R."/>
            <person name="Fasulo D."/>
            <person name="Halldorsson B.V."/>
            <person name="Hannenhalli S."/>
            <person name="Turner R."/>
            <person name="Yooseph S."/>
            <person name="Lu F."/>
            <person name="Nusskern D.R."/>
            <person name="Shue B.C."/>
            <person name="Zheng X.H."/>
            <person name="Zhong F."/>
            <person name="Delcher A.L."/>
            <person name="Huson D.H."/>
            <person name="Kravitz S.A."/>
            <person name="Mouchard L."/>
            <person name="Reinert K."/>
            <person name="Remington K.A."/>
            <person name="Clark A.G."/>
            <person name="Waterman M.S."/>
            <person name="Eichler E.E."/>
            <person name="Adams M.D."/>
            <person name="Hunkapiller M.W."/>
            <person name="Myers E.W."/>
            <person name="Venter J.C."/>
        </authorList>
    </citation>
    <scope>NUCLEOTIDE SEQUENCE [LARGE SCALE GENOMIC DNA]</scope>
</reference>
<reference key="5">
    <citation type="journal article" date="2004" name="Genome Res.">
        <title>The status, quality, and expansion of the NIH full-length cDNA project: the Mammalian Gene Collection (MGC).</title>
        <authorList>
            <consortium name="The MGC Project Team"/>
        </authorList>
    </citation>
    <scope>NUCLEOTIDE SEQUENCE [LARGE SCALE MRNA] (ISOFORMS 1 AND 2)</scope>
    <scope>VARIANT ALA-ASP-ALA-PRO-LYS-GLU-GLY-ARG-LEU-THR-ARG-PHE-LEU-ASP-PHE-THR-GLN-LEU-MET-1 INS</scope>
    <source>
        <tissue>Brain</tissue>
    </source>
</reference>
<reference key="6">
    <citation type="journal article" date="2002" name="Gene">
        <title>Genomic organization and chromosome localization of the murine and human allantoicase gene.</title>
        <authorList>
            <person name="Vigetti D."/>
            <person name="Monetti C."/>
            <person name="Prati M."/>
            <person name="Gornati R."/>
            <person name="Bernardini G."/>
        </authorList>
    </citation>
    <scope>NUCLEOTIDE SEQUENCE [MRNA] OF 16-353 (ISOFORM 1)</scope>
    <scope>GENE STRUCTURE</scope>
    <scope>FUNCTION</scope>
</reference>
<evidence type="ECO:0000303" key="1">
    <source>
    </source>
</evidence>
<evidence type="ECO:0000303" key="2">
    <source>
    </source>
</evidence>
<evidence type="ECO:0000305" key="3"/>
<evidence type="ECO:0000305" key="4">
    <source>
    </source>
</evidence>
<evidence type="ECO:0000312" key="5">
    <source>
        <dbReference type="EMBL" id="BAG63639.1"/>
    </source>
</evidence>
<evidence type="ECO:0000312" key="6">
    <source>
        <dbReference type="EMBL" id="EAX01050.1"/>
    </source>
</evidence>
<evidence type="ECO:0000312" key="7">
    <source>
        <dbReference type="HGNC" id="HGNC:17377"/>
    </source>
</evidence>
<protein>
    <recommendedName>
        <fullName>Probable inactive allantoicase</fullName>
    </recommendedName>
    <alternativeName>
        <fullName>Allantoate amidinohydrolase</fullName>
    </alternativeName>
</protein>
<organism>
    <name type="scientific">Homo sapiens</name>
    <name type="common">Human</name>
    <dbReference type="NCBI Taxonomy" id="9606"/>
    <lineage>
        <taxon>Eukaryota</taxon>
        <taxon>Metazoa</taxon>
        <taxon>Chordata</taxon>
        <taxon>Craniata</taxon>
        <taxon>Vertebrata</taxon>
        <taxon>Euteleostomi</taxon>
        <taxon>Mammalia</taxon>
        <taxon>Eutheria</taxon>
        <taxon>Euarchontoglires</taxon>
        <taxon>Primates</taxon>
        <taxon>Haplorrhini</taxon>
        <taxon>Catarrhini</taxon>
        <taxon>Hominidae</taxon>
        <taxon>Homo</taxon>
    </lineage>
</organism>